<sequence>MARLSSLLSFSLALLIFLHGSTAQQFPNECQLDQLNALEPSHVLKAEAGRIEVWDHHAPQLRCSGVSFVRYIIESKGLYLPSFFSTAKLSFVAKGEGLMGRVVPGCAETFQDSSVFQPSGGSPSGEGQGQGQQGQGQGHQGQGQGQQGQQGQQGQQSQGQGFRDMHQKVEHIRTGDTIATHPGVAQWFYNDGNQPLVIVSVLDLASHQNQLDRNPRPFYLAGNNPQGQVWIEGREQQPQKNILNGFTPEVLAKAFKIDVRTAQQLQNQQDNRGNIIRVQGPFSVIRPPLRSQRPQETEVNGLEETICSARCTDNLDDPSNADVYKPQLGYISTLNSYDLPILRFLRLSALRGSIRQNAMVLPQWNANANAVLYVTDGEAHVQVVNDNGDRVFDGQVSQGQLLSIPQGFSVVKRATSEQFRWIEFKTNANAQINTLAGRTSVLRGLPLEVISNGYQISLEEARRVKFNTIETTLTHSSGPASYGGPRKADA</sequence>
<proteinExistence type="inferred from homology"/>
<reference key="1">
    <citation type="journal article" date="1992" name="Plant Mol. Biol.">
        <title>Molecular analysis of a cruciferin storage protein gene family of Brassica napus.</title>
        <authorList>
            <person name="Breen J.P."/>
            <person name="Crouch M.L."/>
        </authorList>
    </citation>
    <scope>NUCLEOTIDE SEQUENCE [GENOMIC DNA]</scope>
    <source>
        <strain>cv. Tower</strain>
    </source>
</reference>
<name>CRU1_BRANA</name>
<organism>
    <name type="scientific">Brassica napus</name>
    <name type="common">Rape</name>
    <dbReference type="NCBI Taxonomy" id="3708"/>
    <lineage>
        <taxon>Eukaryota</taxon>
        <taxon>Viridiplantae</taxon>
        <taxon>Streptophyta</taxon>
        <taxon>Embryophyta</taxon>
        <taxon>Tracheophyta</taxon>
        <taxon>Spermatophyta</taxon>
        <taxon>Magnoliopsida</taxon>
        <taxon>eudicotyledons</taxon>
        <taxon>Gunneridae</taxon>
        <taxon>Pentapetalae</taxon>
        <taxon>rosids</taxon>
        <taxon>malvids</taxon>
        <taxon>Brassicales</taxon>
        <taxon>Brassicaceae</taxon>
        <taxon>Brassiceae</taxon>
        <taxon>Brassica</taxon>
    </lineage>
</organism>
<keyword id="KW-1015">Disulfide bond</keyword>
<keyword id="KW-0597">Phosphoprotein</keyword>
<keyword id="KW-0708">Seed storage protein</keyword>
<keyword id="KW-0732">Signal</keyword>
<keyword id="KW-0758">Storage protein</keyword>
<protein>
    <recommendedName>
        <fullName>Cruciferin BnC1</fullName>
    </recommendedName>
    <alternativeName>
        <fullName>11S globulin</fullName>
    </alternativeName>
    <alternativeName>
        <fullName>12S storage protein</fullName>
    </alternativeName>
    <component>
        <recommendedName>
            <fullName>Cruciferin BnC1 subunit alpha</fullName>
        </recommendedName>
    </component>
    <component>
        <recommendedName>
            <fullName>Cruciferin BnC1 subunit beta</fullName>
        </recommendedName>
    </component>
</protein>
<feature type="signal peptide" evidence="1">
    <location>
        <begin position="1"/>
        <end position="23"/>
    </location>
</feature>
<feature type="chain" id="PRO_0000032032" description="Cruciferin BnC1 subunit alpha">
    <location>
        <begin position="24"/>
        <end position="300"/>
    </location>
</feature>
<feature type="chain" id="PRO_0000032033" description="Cruciferin BnC1 subunit beta">
    <location>
        <begin position="301"/>
        <end position="490"/>
    </location>
</feature>
<feature type="domain" description="Cupin type-1 1" evidence="4">
    <location>
        <begin position="35"/>
        <end position="263"/>
    </location>
</feature>
<feature type="domain" description="Cupin type-1 2" evidence="4">
    <location>
        <begin position="313"/>
        <end position="462"/>
    </location>
</feature>
<feature type="region of interest" description="Disordered" evidence="5">
    <location>
        <begin position="113"/>
        <end position="164"/>
    </location>
</feature>
<feature type="compositionally biased region" description="Gly residues" evidence="5">
    <location>
        <begin position="122"/>
        <end position="148"/>
    </location>
</feature>
<feature type="compositionally biased region" description="Low complexity" evidence="5">
    <location>
        <begin position="149"/>
        <end position="161"/>
    </location>
</feature>
<feature type="modified residue" description="Phosphothreonine" evidence="2">
    <location>
        <position position="109"/>
    </location>
</feature>
<feature type="modified residue" description="Phosphotyrosine" evidence="2">
    <location>
        <position position="330"/>
    </location>
</feature>
<feature type="modified residue" description="Phosphoserine" evidence="2">
    <location>
        <position position="332"/>
    </location>
</feature>
<feature type="modified residue" description="Phosphothreonine" evidence="3">
    <location>
        <position position="426"/>
    </location>
</feature>
<feature type="disulfide bond" evidence="1">
    <location>
        <begin position="30"/>
        <end position="63"/>
    </location>
</feature>
<feature type="disulfide bond" description="Interchain (between alpha and beta chains)" evidence="4">
    <location>
        <begin position="106"/>
        <end position="307"/>
    </location>
</feature>
<comment type="function">
    <text>This is a seed storage protein.</text>
</comment>
<comment type="subunit">
    <text>Hexamer; each subunit is composed of an acidic and a basic chain derived from a single precursor and linked by a disulfide bond.</text>
</comment>
<comment type="similarity">
    <text evidence="6">Belongs to the 11S seed storage protein (globulins) family.</text>
</comment>
<dbReference type="EMBL" id="X59294">
    <property type="protein sequence ID" value="CAA41984.1"/>
    <property type="molecule type" value="Genomic_DNA"/>
</dbReference>
<dbReference type="SMR" id="P33523"/>
<dbReference type="GO" id="GO:0045735">
    <property type="term" value="F:nutrient reservoir activity"/>
    <property type="evidence" value="ECO:0007669"/>
    <property type="project" value="UniProtKB-KW"/>
</dbReference>
<dbReference type="GO" id="GO:0010431">
    <property type="term" value="P:seed maturation"/>
    <property type="evidence" value="ECO:0007669"/>
    <property type="project" value="UniProtKB-ARBA"/>
</dbReference>
<dbReference type="CDD" id="cd02243">
    <property type="entry name" value="cupin_11S_legumin_C"/>
    <property type="match status" value="1"/>
</dbReference>
<dbReference type="CDD" id="cd02242">
    <property type="entry name" value="cupin_11S_legumin_N"/>
    <property type="match status" value="1"/>
</dbReference>
<dbReference type="FunFam" id="2.60.120.10:FF:000073">
    <property type="entry name" value="Glycinin G1"/>
    <property type="match status" value="1"/>
</dbReference>
<dbReference type="Gene3D" id="2.60.120.10">
    <property type="entry name" value="Jelly Rolls"/>
    <property type="match status" value="2"/>
</dbReference>
<dbReference type="InterPro" id="IPR022379">
    <property type="entry name" value="11S_seedstore_CS"/>
</dbReference>
<dbReference type="InterPro" id="IPR006044">
    <property type="entry name" value="11S_seedstore_pln"/>
</dbReference>
<dbReference type="InterPro" id="IPR006045">
    <property type="entry name" value="Cupin_1"/>
</dbReference>
<dbReference type="InterPro" id="IPR014710">
    <property type="entry name" value="RmlC-like_jellyroll"/>
</dbReference>
<dbReference type="InterPro" id="IPR011051">
    <property type="entry name" value="RmlC_Cupin_sf"/>
</dbReference>
<dbReference type="InterPro" id="IPR050253">
    <property type="entry name" value="Seed_Storage-Functional"/>
</dbReference>
<dbReference type="PANTHER" id="PTHR31189:SF30">
    <property type="entry name" value="12S SEED STORAGE PROTEIN CRA1"/>
    <property type="match status" value="1"/>
</dbReference>
<dbReference type="PANTHER" id="PTHR31189">
    <property type="entry name" value="OS03G0336100 PROTEIN-RELATED"/>
    <property type="match status" value="1"/>
</dbReference>
<dbReference type="Pfam" id="PF00190">
    <property type="entry name" value="Cupin_1"/>
    <property type="match status" value="2"/>
</dbReference>
<dbReference type="PRINTS" id="PR00439">
    <property type="entry name" value="11SGLOBULIN"/>
</dbReference>
<dbReference type="SMART" id="SM00835">
    <property type="entry name" value="Cupin_1"/>
    <property type="match status" value="2"/>
</dbReference>
<dbReference type="SUPFAM" id="SSF51182">
    <property type="entry name" value="RmlC-like cupins"/>
    <property type="match status" value="1"/>
</dbReference>
<dbReference type="PROSITE" id="PS00305">
    <property type="entry name" value="11S_SEED_STORAGE"/>
    <property type="match status" value="1"/>
</dbReference>
<evidence type="ECO:0000250" key="1"/>
<evidence type="ECO:0000250" key="2">
    <source>
        <dbReference type="UniProtKB" id="P15455"/>
    </source>
</evidence>
<evidence type="ECO:0000250" key="3">
    <source>
        <dbReference type="UniProtKB" id="P15456"/>
    </source>
</evidence>
<evidence type="ECO:0000255" key="4"/>
<evidence type="ECO:0000256" key="5">
    <source>
        <dbReference type="SAM" id="MobiDB-lite"/>
    </source>
</evidence>
<evidence type="ECO:0000305" key="6"/>
<gene>
    <name type="primary">BnC1</name>
</gene>
<accession>P33523</accession>